<evidence type="ECO:0000255" key="1">
    <source>
        <dbReference type="HAMAP-Rule" id="MF_01682"/>
    </source>
</evidence>
<evidence type="ECO:0000305" key="2"/>
<name>MTND_PSEPF</name>
<feature type="chain" id="PRO_0000359221" description="Acireductone dioxygenase">
    <location>
        <begin position="1"/>
        <end position="181"/>
    </location>
</feature>
<feature type="binding site" evidence="1">
    <location>
        <position position="97"/>
    </location>
    <ligand>
        <name>Fe(2+)</name>
        <dbReference type="ChEBI" id="CHEBI:29033"/>
    </ligand>
</feature>
<feature type="binding site" evidence="1">
    <location>
        <position position="97"/>
    </location>
    <ligand>
        <name>Ni(2+)</name>
        <dbReference type="ChEBI" id="CHEBI:49786"/>
    </ligand>
</feature>
<feature type="binding site" evidence="1">
    <location>
        <position position="99"/>
    </location>
    <ligand>
        <name>Fe(2+)</name>
        <dbReference type="ChEBI" id="CHEBI:29033"/>
    </ligand>
</feature>
<feature type="binding site" evidence="1">
    <location>
        <position position="99"/>
    </location>
    <ligand>
        <name>Ni(2+)</name>
        <dbReference type="ChEBI" id="CHEBI:49786"/>
    </ligand>
</feature>
<feature type="binding site" evidence="1">
    <location>
        <position position="103"/>
    </location>
    <ligand>
        <name>Fe(2+)</name>
        <dbReference type="ChEBI" id="CHEBI:29033"/>
    </ligand>
</feature>
<feature type="binding site" evidence="1">
    <location>
        <position position="103"/>
    </location>
    <ligand>
        <name>Ni(2+)</name>
        <dbReference type="ChEBI" id="CHEBI:49786"/>
    </ligand>
</feature>
<feature type="binding site" evidence="1">
    <location>
        <position position="141"/>
    </location>
    <ligand>
        <name>Fe(2+)</name>
        <dbReference type="ChEBI" id="CHEBI:29033"/>
    </ligand>
</feature>
<feature type="binding site" evidence="1">
    <location>
        <position position="141"/>
    </location>
    <ligand>
        <name>Ni(2+)</name>
        <dbReference type="ChEBI" id="CHEBI:49786"/>
    </ligand>
</feature>
<feature type="site" description="May play a role in metal incorporation in vivo" evidence="1">
    <location>
        <position position="96"/>
    </location>
</feature>
<feature type="site" description="May play a role in transmitting local conformational changes" evidence="1">
    <location>
        <position position="102"/>
    </location>
</feature>
<feature type="site" description="Important to generate the dianion" evidence="1">
    <location>
        <position position="105"/>
    </location>
</feature>
<dbReference type="EC" id="1.13.11.54" evidence="1"/>
<dbReference type="EC" id="1.13.11.53" evidence="1"/>
<dbReference type="EMBL" id="CP000094">
    <property type="protein sequence ID" value="ABA73468.1"/>
    <property type="status" value="ALT_INIT"/>
    <property type="molecule type" value="Genomic_DNA"/>
</dbReference>
<dbReference type="RefSeq" id="WP_039770173.1">
    <property type="nucleotide sequence ID" value="NC_007492.2"/>
</dbReference>
<dbReference type="SMR" id="Q3KFI8"/>
<dbReference type="KEGG" id="pfo:Pfl01_1725"/>
<dbReference type="eggNOG" id="COG1791">
    <property type="taxonomic scope" value="Bacteria"/>
</dbReference>
<dbReference type="HOGENOM" id="CLU_125400_0_0_6"/>
<dbReference type="UniPathway" id="UPA00904">
    <property type="reaction ID" value="UER00878"/>
</dbReference>
<dbReference type="Proteomes" id="UP000002704">
    <property type="component" value="Chromosome"/>
</dbReference>
<dbReference type="GO" id="GO:0010308">
    <property type="term" value="F:acireductone dioxygenase (Ni2+-requiring) activity"/>
    <property type="evidence" value="ECO:0007669"/>
    <property type="project" value="UniProtKB-UniRule"/>
</dbReference>
<dbReference type="GO" id="GO:0010309">
    <property type="term" value="F:acireductone dioxygenase [iron(II)-requiring] activity"/>
    <property type="evidence" value="ECO:0007669"/>
    <property type="project" value="UniProtKB-UniRule"/>
</dbReference>
<dbReference type="GO" id="GO:0005506">
    <property type="term" value="F:iron ion binding"/>
    <property type="evidence" value="ECO:0007669"/>
    <property type="project" value="UniProtKB-UniRule"/>
</dbReference>
<dbReference type="GO" id="GO:0016151">
    <property type="term" value="F:nickel cation binding"/>
    <property type="evidence" value="ECO:0007669"/>
    <property type="project" value="UniProtKB-UniRule"/>
</dbReference>
<dbReference type="GO" id="GO:0019509">
    <property type="term" value="P:L-methionine salvage from methylthioadenosine"/>
    <property type="evidence" value="ECO:0007669"/>
    <property type="project" value="UniProtKB-UniRule"/>
</dbReference>
<dbReference type="GO" id="GO:0019284">
    <property type="term" value="P:L-methionine salvage from S-adenosylmethionine"/>
    <property type="evidence" value="ECO:0007669"/>
    <property type="project" value="InterPro"/>
</dbReference>
<dbReference type="CDD" id="cd02232">
    <property type="entry name" value="cupin_ARD"/>
    <property type="match status" value="1"/>
</dbReference>
<dbReference type="Gene3D" id="2.60.120.10">
    <property type="entry name" value="Jelly Rolls"/>
    <property type="match status" value="1"/>
</dbReference>
<dbReference type="HAMAP" id="MF_01682">
    <property type="entry name" value="Salvage_MtnD"/>
    <property type="match status" value="1"/>
</dbReference>
<dbReference type="InterPro" id="IPR004313">
    <property type="entry name" value="ARD"/>
</dbReference>
<dbReference type="InterPro" id="IPR023956">
    <property type="entry name" value="ARD_bac"/>
</dbReference>
<dbReference type="InterPro" id="IPR014710">
    <property type="entry name" value="RmlC-like_jellyroll"/>
</dbReference>
<dbReference type="InterPro" id="IPR011051">
    <property type="entry name" value="RmlC_Cupin_sf"/>
</dbReference>
<dbReference type="PANTHER" id="PTHR23418">
    <property type="entry name" value="ACIREDUCTONE DIOXYGENASE"/>
    <property type="match status" value="1"/>
</dbReference>
<dbReference type="PANTHER" id="PTHR23418:SF0">
    <property type="entry name" value="ACIREDUCTONE DIOXYGENASE"/>
    <property type="match status" value="1"/>
</dbReference>
<dbReference type="Pfam" id="PF03079">
    <property type="entry name" value="ARD"/>
    <property type="match status" value="1"/>
</dbReference>
<dbReference type="SUPFAM" id="SSF51182">
    <property type="entry name" value="RmlC-like cupins"/>
    <property type="match status" value="1"/>
</dbReference>
<sequence>MSSLSVYHVSSPEIPNKVLTHFEDIASTLAEQGVRFDRWQAAAKIQPGASQEEVIGAYKEQIDKLMTERGYITVDVISLNSDHPQKAELRAKFLEEHRHGEDEVRFFVAGRGLFTLHIDDYVYAVLCEKNDLISVPAGTKHWFDMGENPHFVAIRLFNNPEGWVANFTGEDIAGRFPRLED</sequence>
<accession>Q3KFI8</accession>
<proteinExistence type="inferred from homology"/>
<gene>
    <name evidence="1" type="primary">mtnD</name>
    <name type="ordered locus">Pfl01_1725</name>
</gene>
<keyword id="KW-0028">Amino-acid biosynthesis</keyword>
<keyword id="KW-0223">Dioxygenase</keyword>
<keyword id="KW-0408">Iron</keyword>
<keyword id="KW-0479">Metal-binding</keyword>
<keyword id="KW-0486">Methionine biosynthesis</keyword>
<keyword id="KW-0533">Nickel</keyword>
<keyword id="KW-0560">Oxidoreductase</keyword>
<protein>
    <recommendedName>
        <fullName evidence="1">Acireductone dioxygenase</fullName>
    </recommendedName>
    <alternativeName>
        <fullName evidence="1">1,2-dihydroxy-3-keto-5-methylthiopentene dioxygenase</fullName>
        <shortName evidence="1">DHK-MTPene dioxygenase</shortName>
    </alternativeName>
    <alternativeName>
        <fullName evidence="1">Acireductone dioxygenase (Fe(2+)-requiring)</fullName>
        <shortName evidence="1">ARD'</shortName>
        <shortName evidence="1">Fe-ARD</shortName>
        <ecNumber evidence="1">1.13.11.54</ecNumber>
    </alternativeName>
    <alternativeName>
        <fullName evidence="1">Acireductone dioxygenase (Ni(2+)-requiring)</fullName>
        <shortName evidence="1">ARD</shortName>
        <shortName evidence="1">Ni-ARD</shortName>
        <ecNumber evidence="1">1.13.11.53</ecNumber>
    </alternativeName>
</protein>
<organism>
    <name type="scientific">Pseudomonas fluorescens (strain Pf0-1)</name>
    <dbReference type="NCBI Taxonomy" id="205922"/>
    <lineage>
        <taxon>Bacteria</taxon>
        <taxon>Pseudomonadati</taxon>
        <taxon>Pseudomonadota</taxon>
        <taxon>Gammaproteobacteria</taxon>
        <taxon>Pseudomonadales</taxon>
        <taxon>Pseudomonadaceae</taxon>
        <taxon>Pseudomonas</taxon>
    </lineage>
</organism>
<comment type="function">
    <text evidence="1">Catalyzes 2 different reactions between oxygen and the acireductone 1,2-dihydroxy-3-keto-5-methylthiopentene (DHK-MTPene) depending upon the metal bound in the active site. Fe-containing acireductone dioxygenase (Fe-ARD) produces formate and 2-keto-4-methylthiobutyrate (KMTB), the alpha-ketoacid precursor of methionine in the methionine recycle pathway. Ni-containing acireductone dioxygenase (Ni-ARD) produces methylthiopropionate, carbon monoxide and formate, and does not lie on the methionine recycle pathway.</text>
</comment>
<comment type="catalytic activity">
    <reaction evidence="1">
        <text>1,2-dihydroxy-5-(methylsulfanyl)pent-1-en-3-one + O2 = 3-(methylsulfanyl)propanoate + CO + formate + 2 H(+)</text>
        <dbReference type="Rhea" id="RHEA:14161"/>
        <dbReference type="ChEBI" id="CHEBI:15378"/>
        <dbReference type="ChEBI" id="CHEBI:15379"/>
        <dbReference type="ChEBI" id="CHEBI:15740"/>
        <dbReference type="ChEBI" id="CHEBI:17245"/>
        <dbReference type="ChEBI" id="CHEBI:49016"/>
        <dbReference type="ChEBI" id="CHEBI:49252"/>
        <dbReference type="EC" id="1.13.11.53"/>
    </reaction>
</comment>
<comment type="catalytic activity">
    <reaction evidence="1">
        <text>1,2-dihydroxy-5-(methylsulfanyl)pent-1-en-3-one + O2 = 4-methylsulfanyl-2-oxobutanoate + formate + 2 H(+)</text>
        <dbReference type="Rhea" id="RHEA:24504"/>
        <dbReference type="ChEBI" id="CHEBI:15378"/>
        <dbReference type="ChEBI" id="CHEBI:15379"/>
        <dbReference type="ChEBI" id="CHEBI:15740"/>
        <dbReference type="ChEBI" id="CHEBI:16723"/>
        <dbReference type="ChEBI" id="CHEBI:49252"/>
        <dbReference type="EC" id="1.13.11.54"/>
    </reaction>
</comment>
<comment type="cofactor">
    <cofactor evidence="1">
        <name>Fe(2+)</name>
        <dbReference type="ChEBI" id="CHEBI:29033"/>
    </cofactor>
    <text evidence="1">Binds 1 Fe(2+) cation per monomer.</text>
</comment>
<comment type="cofactor">
    <cofactor evidence="1">
        <name>Ni(2+)</name>
        <dbReference type="ChEBI" id="CHEBI:49786"/>
    </cofactor>
    <text evidence="1">Binds 1 nickel ion per monomer.</text>
</comment>
<comment type="pathway">
    <text evidence="1">Amino-acid biosynthesis; L-methionine biosynthesis via salvage pathway; L-methionine from S-methyl-5-thio-alpha-D-ribose 1-phosphate: step 5/6.</text>
</comment>
<comment type="subunit">
    <text evidence="1">Monomer.</text>
</comment>
<comment type="similarity">
    <text evidence="1">Belongs to the acireductone dioxygenase (ARD) family.</text>
</comment>
<comment type="sequence caution" evidence="2">
    <conflict type="erroneous initiation">
        <sequence resource="EMBL-CDS" id="ABA73468"/>
    </conflict>
</comment>
<reference key="1">
    <citation type="journal article" date="2009" name="Genome Biol.">
        <title>Genomic and genetic analyses of diversity and plant interactions of Pseudomonas fluorescens.</title>
        <authorList>
            <person name="Silby M.W."/>
            <person name="Cerdeno-Tarraga A.M."/>
            <person name="Vernikos G.S."/>
            <person name="Giddens S.R."/>
            <person name="Jackson R.W."/>
            <person name="Preston G.M."/>
            <person name="Zhang X.-X."/>
            <person name="Moon C.D."/>
            <person name="Gehrig S.M."/>
            <person name="Godfrey S.A.C."/>
            <person name="Knight C.G."/>
            <person name="Malone J.G."/>
            <person name="Robinson Z."/>
            <person name="Spiers A.J."/>
            <person name="Harris S."/>
            <person name="Challis G.L."/>
            <person name="Yaxley A.M."/>
            <person name="Harris D."/>
            <person name="Seeger K."/>
            <person name="Murphy L."/>
            <person name="Rutter S."/>
            <person name="Squares R."/>
            <person name="Quail M.A."/>
            <person name="Saunders E."/>
            <person name="Mavromatis K."/>
            <person name="Brettin T.S."/>
            <person name="Bentley S.D."/>
            <person name="Hothersall J."/>
            <person name="Stephens E."/>
            <person name="Thomas C.M."/>
            <person name="Parkhill J."/>
            <person name="Levy S.B."/>
            <person name="Rainey P.B."/>
            <person name="Thomson N.R."/>
        </authorList>
    </citation>
    <scope>NUCLEOTIDE SEQUENCE [LARGE SCALE GENOMIC DNA]</scope>
    <source>
        <strain>Pf0-1</strain>
    </source>
</reference>